<name>PUR5_BURCM</name>
<feature type="chain" id="PRO_1000046425" description="Phosphoribosylformylglycinamidine cyclo-ligase">
    <location>
        <begin position="1"/>
        <end position="351"/>
    </location>
</feature>
<dbReference type="EC" id="6.3.3.1" evidence="1"/>
<dbReference type="EMBL" id="CP000440">
    <property type="protein sequence ID" value="ABI86214.1"/>
    <property type="molecule type" value="Genomic_DNA"/>
</dbReference>
<dbReference type="RefSeq" id="WP_006750666.1">
    <property type="nucleotide sequence ID" value="NZ_CP009798.1"/>
</dbReference>
<dbReference type="SMR" id="Q0BI09"/>
<dbReference type="GeneID" id="93083935"/>
<dbReference type="KEGG" id="bam:Bamb_0655"/>
<dbReference type="PATRIC" id="fig|339670.21.peg.941"/>
<dbReference type="eggNOG" id="COG0150">
    <property type="taxonomic scope" value="Bacteria"/>
</dbReference>
<dbReference type="UniPathway" id="UPA00074">
    <property type="reaction ID" value="UER00129"/>
</dbReference>
<dbReference type="Proteomes" id="UP000000662">
    <property type="component" value="Chromosome 1"/>
</dbReference>
<dbReference type="GO" id="GO:0005829">
    <property type="term" value="C:cytosol"/>
    <property type="evidence" value="ECO:0007669"/>
    <property type="project" value="TreeGrafter"/>
</dbReference>
<dbReference type="GO" id="GO:0005524">
    <property type="term" value="F:ATP binding"/>
    <property type="evidence" value="ECO:0007669"/>
    <property type="project" value="UniProtKB-KW"/>
</dbReference>
<dbReference type="GO" id="GO:0004637">
    <property type="term" value="F:phosphoribosylamine-glycine ligase activity"/>
    <property type="evidence" value="ECO:0007669"/>
    <property type="project" value="TreeGrafter"/>
</dbReference>
<dbReference type="GO" id="GO:0004641">
    <property type="term" value="F:phosphoribosylformylglycinamidine cyclo-ligase activity"/>
    <property type="evidence" value="ECO:0007669"/>
    <property type="project" value="UniProtKB-UniRule"/>
</dbReference>
<dbReference type="GO" id="GO:0006189">
    <property type="term" value="P:'de novo' IMP biosynthetic process"/>
    <property type="evidence" value="ECO:0007669"/>
    <property type="project" value="UniProtKB-UniRule"/>
</dbReference>
<dbReference type="GO" id="GO:0046084">
    <property type="term" value="P:adenine biosynthetic process"/>
    <property type="evidence" value="ECO:0007669"/>
    <property type="project" value="TreeGrafter"/>
</dbReference>
<dbReference type="CDD" id="cd02196">
    <property type="entry name" value="PurM"/>
    <property type="match status" value="1"/>
</dbReference>
<dbReference type="FunFam" id="3.30.1330.10:FF:000001">
    <property type="entry name" value="Phosphoribosylformylglycinamidine cyclo-ligase"/>
    <property type="match status" value="1"/>
</dbReference>
<dbReference type="FunFam" id="3.90.650.10:FF:000001">
    <property type="entry name" value="Phosphoribosylformylglycinamidine cyclo-ligase"/>
    <property type="match status" value="1"/>
</dbReference>
<dbReference type="Gene3D" id="3.90.650.10">
    <property type="entry name" value="PurM-like C-terminal domain"/>
    <property type="match status" value="1"/>
</dbReference>
<dbReference type="Gene3D" id="3.30.1330.10">
    <property type="entry name" value="PurM-like, N-terminal domain"/>
    <property type="match status" value="1"/>
</dbReference>
<dbReference type="HAMAP" id="MF_00741">
    <property type="entry name" value="AIRS"/>
    <property type="match status" value="1"/>
</dbReference>
<dbReference type="InterPro" id="IPR010918">
    <property type="entry name" value="PurM-like_C_dom"/>
</dbReference>
<dbReference type="InterPro" id="IPR036676">
    <property type="entry name" value="PurM-like_C_sf"/>
</dbReference>
<dbReference type="InterPro" id="IPR016188">
    <property type="entry name" value="PurM-like_N"/>
</dbReference>
<dbReference type="InterPro" id="IPR036921">
    <property type="entry name" value="PurM-like_N_sf"/>
</dbReference>
<dbReference type="InterPro" id="IPR004733">
    <property type="entry name" value="PurM_cligase"/>
</dbReference>
<dbReference type="NCBIfam" id="TIGR00878">
    <property type="entry name" value="purM"/>
    <property type="match status" value="1"/>
</dbReference>
<dbReference type="PANTHER" id="PTHR10520:SF12">
    <property type="entry name" value="TRIFUNCTIONAL PURINE BIOSYNTHETIC PROTEIN ADENOSINE-3"/>
    <property type="match status" value="1"/>
</dbReference>
<dbReference type="PANTHER" id="PTHR10520">
    <property type="entry name" value="TRIFUNCTIONAL PURINE BIOSYNTHETIC PROTEIN ADENOSINE-3-RELATED"/>
    <property type="match status" value="1"/>
</dbReference>
<dbReference type="Pfam" id="PF00586">
    <property type="entry name" value="AIRS"/>
    <property type="match status" value="1"/>
</dbReference>
<dbReference type="Pfam" id="PF02769">
    <property type="entry name" value="AIRS_C"/>
    <property type="match status" value="1"/>
</dbReference>
<dbReference type="SUPFAM" id="SSF56042">
    <property type="entry name" value="PurM C-terminal domain-like"/>
    <property type="match status" value="1"/>
</dbReference>
<dbReference type="SUPFAM" id="SSF55326">
    <property type="entry name" value="PurM N-terminal domain-like"/>
    <property type="match status" value="1"/>
</dbReference>
<gene>
    <name evidence="1" type="primary">purM</name>
    <name type="ordered locus">Bamb_0655</name>
</gene>
<protein>
    <recommendedName>
        <fullName evidence="1">Phosphoribosylformylglycinamidine cyclo-ligase</fullName>
        <ecNumber evidence="1">6.3.3.1</ecNumber>
    </recommendedName>
    <alternativeName>
        <fullName evidence="1">AIR synthase</fullName>
    </alternativeName>
    <alternativeName>
        <fullName evidence="1">AIRS</fullName>
    </alternativeName>
    <alternativeName>
        <fullName evidence="1">Phosphoribosyl-aminoimidazole synthetase</fullName>
    </alternativeName>
</protein>
<sequence>MNPPKSAPDAQGLSYRDAGVDIDAGDALIDKIKPFAKKTLRDGVLGGIGGFGALFEVPKKYKEPVLVSGTDGVGTKLKLAFHLNKHDTVGQDLVAMSVNDILVQGAEPLFFLDYFACGKLDVDTAATVVKGIAHGCELSGCALIGGETAEMPGMYPDGEYDLAGFAVGAVEKSKIIDGSTIAEGDVVLGLASSGIHSNGFSLVRKIIERANPDLSADFHGRSLADTLMAPTRIYVKPLLALMQKLPVKGMAHITGGGLVENIPRVLREGLTAELDQNAWPLPPLFKWLQEHGGVADAEMHRVFNCGIGMAVIVSAADADAAIADLTAAGEQVWKIGTVRASREGEAQTVVV</sequence>
<comment type="catalytic activity">
    <reaction evidence="1">
        <text>2-formamido-N(1)-(5-O-phospho-beta-D-ribosyl)acetamidine + ATP = 5-amino-1-(5-phospho-beta-D-ribosyl)imidazole + ADP + phosphate + H(+)</text>
        <dbReference type="Rhea" id="RHEA:23032"/>
        <dbReference type="ChEBI" id="CHEBI:15378"/>
        <dbReference type="ChEBI" id="CHEBI:30616"/>
        <dbReference type="ChEBI" id="CHEBI:43474"/>
        <dbReference type="ChEBI" id="CHEBI:137981"/>
        <dbReference type="ChEBI" id="CHEBI:147287"/>
        <dbReference type="ChEBI" id="CHEBI:456216"/>
        <dbReference type="EC" id="6.3.3.1"/>
    </reaction>
</comment>
<comment type="pathway">
    <text evidence="1">Purine metabolism; IMP biosynthesis via de novo pathway; 5-amino-1-(5-phospho-D-ribosyl)imidazole from N(2)-formyl-N(1)-(5-phospho-D-ribosyl)glycinamide: step 2/2.</text>
</comment>
<comment type="subcellular location">
    <subcellularLocation>
        <location evidence="1">Cytoplasm</location>
    </subcellularLocation>
</comment>
<comment type="similarity">
    <text evidence="1">Belongs to the AIR synthase family.</text>
</comment>
<organism>
    <name type="scientific">Burkholderia ambifaria (strain ATCC BAA-244 / DSM 16087 / CCUG 44356 / LMG 19182 / AMMD)</name>
    <name type="common">Burkholderia cepacia (strain AMMD)</name>
    <dbReference type="NCBI Taxonomy" id="339670"/>
    <lineage>
        <taxon>Bacteria</taxon>
        <taxon>Pseudomonadati</taxon>
        <taxon>Pseudomonadota</taxon>
        <taxon>Betaproteobacteria</taxon>
        <taxon>Burkholderiales</taxon>
        <taxon>Burkholderiaceae</taxon>
        <taxon>Burkholderia</taxon>
        <taxon>Burkholderia cepacia complex</taxon>
    </lineage>
</organism>
<reference key="1">
    <citation type="submission" date="2006-08" db="EMBL/GenBank/DDBJ databases">
        <title>Complete sequence of chromosome 1 of Burkholderia cepacia AMMD.</title>
        <authorList>
            <person name="Copeland A."/>
            <person name="Lucas S."/>
            <person name="Lapidus A."/>
            <person name="Barry K."/>
            <person name="Detter J.C."/>
            <person name="Glavina del Rio T."/>
            <person name="Hammon N."/>
            <person name="Israni S."/>
            <person name="Pitluck S."/>
            <person name="Bruce D."/>
            <person name="Chain P."/>
            <person name="Malfatti S."/>
            <person name="Shin M."/>
            <person name="Vergez L."/>
            <person name="Schmutz J."/>
            <person name="Larimer F."/>
            <person name="Land M."/>
            <person name="Hauser L."/>
            <person name="Kyrpides N."/>
            <person name="Kim E."/>
            <person name="Parke J."/>
            <person name="Coenye T."/>
            <person name="Konstantinidis K."/>
            <person name="Ramette A."/>
            <person name="Tiedje J."/>
            <person name="Richardson P."/>
        </authorList>
    </citation>
    <scope>NUCLEOTIDE SEQUENCE [LARGE SCALE GENOMIC DNA]</scope>
    <source>
        <strain>ATCC BAA-244 / DSM 16087 / CCUG 44356 / LMG 19182 / AMMD</strain>
    </source>
</reference>
<evidence type="ECO:0000255" key="1">
    <source>
        <dbReference type="HAMAP-Rule" id="MF_00741"/>
    </source>
</evidence>
<keyword id="KW-0067">ATP-binding</keyword>
<keyword id="KW-0963">Cytoplasm</keyword>
<keyword id="KW-0436">Ligase</keyword>
<keyword id="KW-0547">Nucleotide-binding</keyword>
<keyword id="KW-0658">Purine biosynthesis</keyword>
<proteinExistence type="inferred from homology"/>
<accession>Q0BI09</accession>